<sequence>MATKIRLKRQGKKFYAFYRVVVVDSRKKRDGKVIEEIGTYNPNTQPSTIQIKSDRAQYWLGVGAQPSEPVFKLLNITGDWQKYKGLEGAEGTLKTVEAGPDAEARIAAVEDQAQKLKAAKSEAAAKAKAEAEAAAAAEEAPAEEAAEEAPAEA</sequence>
<feature type="chain" id="PRO_0000167155" description="Small ribosomal subunit protein bS16">
    <location>
        <begin position="1"/>
        <end position="153"/>
    </location>
</feature>
<feature type="region of interest" description="Disordered" evidence="2">
    <location>
        <begin position="130"/>
        <end position="153"/>
    </location>
</feature>
<feature type="compositionally biased region" description="Acidic residues" evidence="2">
    <location>
        <begin position="140"/>
        <end position="153"/>
    </location>
</feature>
<comment type="similarity">
    <text evidence="1">Belongs to the bacterial ribosomal protein bS16 family.</text>
</comment>
<name>RS16_BIFLO</name>
<evidence type="ECO:0000255" key="1">
    <source>
        <dbReference type="HAMAP-Rule" id="MF_00385"/>
    </source>
</evidence>
<evidence type="ECO:0000256" key="2">
    <source>
        <dbReference type="SAM" id="MobiDB-lite"/>
    </source>
</evidence>
<evidence type="ECO:0000305" key="3"/>
<dbReference type="EMBL" id="AE014295">
    <property type="protein sequence ID" value="AAN24145.1"/>
    <property type="molecule type" value="Genomic_DNA"/>
</dbReference>
<dbReference type="RefSeq" id="NP_695509.1">
    <property type="nucleotide sequence ID" value="NC_004307.2"/>
</dbReference>
<dbReference type="RefSeq" id="WP_007054806.1">
    <property type="nucleotide sequence ID" value="NC_004307.2"/>
</dbReference>
<dbReference type="SMR" id="Q8G7G1"/>
<dbReference type="STRING" id="206672.BL0305"/>
<dbReference type="EnsemblBacteria" id="AAN24145">
    <property type="protein sequence ID" value="AAN24145"/>
    <property type="gene ID" value="BL0305"/>
</dbReference>
<dbReference type="GeneID" id="69577551"/>
<dbReference type="KEGG" id="blo:BL0305"/>
<dbReference type="PATRIC" id="fig|206672.9.peg.1043"/>
<dbReference type="HOGENOM" id="CLU_100590_1_0_11"/>
<dbReference type="OrthoDB" id="9807878at2"/>
<dbReference type="PhylomeDB" id="Q8G7G1"/>
<dbReference type="Proteomes" id="UP000000439">
    <property type="component" value="Chromosome"/>
</dbReference>
<dbReference type="GO" id="GO:0005737">
    <property type="term" value="C:cytoplasm"/>
    <property type="evidence" value="ECO:0007669"/>
    <property type="project" value="UniProtKB-ARBA"/>
</dbReference>
<dbReference type="GO" id="GO:0015935">
    <property type="term" value="C:small ribosomal subunit"/>
    <property type="evidence" value="ECO:0007669"/>
    <property type="project" value="TreeGrafter"/>
</dbReference>
<dbReference type="GO" id="GO:0003735">
    <property type="term" value="F:structural constituent of ribosome"/>
    <property type="evidence" value="ECO:0007669"/>
    <property type="project" value="InterPro"/>
</dbReference>
<dbReference type="GO" id="GO:0006412">
    <property type="term" value="P:translation"/>
    <property type="evidence" value="ECO:0007669"/>
    <property type="project" value="UniProtKB-UniRule"/>
</dbReference>
<dbReference type="Gene3D" id="3.30.1320.10">
    <property type="match status" value="1"/>
</dbReference>
<dbReference type="HAMAP" id="MF_00385">
    <property type="entry name" value="Ribosomal_bS16"/>
    <property type="match status" value="1"/>
</dbReference>
<dbReference type="InterPro" id="IPR000307">
    <property type="entry name" value="Ribosomal_bS16"/>
</dbReference>
<dbReference type="InterPro" id="IPR020592">
    <property type="entry name" value="Ribosomal_bS16_CS"/>
</dbReference>
<dbReference type="InterPro" id="IPR023803">
    <property type="entry name" value="Ribosomal_bS16_dom_sf"/>
</dbReference>
<dbReference type="NCBIfam" id="NF011093">
    <property type="entry name" value="PRK14520.1"/>
    <property type="match status" value="1"/>
</dbReference>
<dbReference type="NCBIfam" id="TIGR00002">
    <property type="entry name" value="S16"/>
    <property type="match status" value="1"/>
</dbReference>
<dbReference type="PANTHER" id="PTHR12919">
    <property type="entry name" value="30S RIBOSOMAL PROTEIN S16"/>
    <property type="match status" value="1"/>
</dbReference>
<dbReference type="PANTHER" id="PTHR12919:SF20">
    <property type="entry name" value="SMALL RIBOSOMAL SUBUNIT PROTEIN BS16M"/>
    <property type="match status" value="1"/>
</dbReference>
<dbReference type="Pfam" id="PF00886">
    <property type="entry name" value="Ribosomal_S16"/>
    <property type="match status" value="1"/>
</dbReference>
<dbReference type="SUPFAM" id="SSF54565">
    <property type="entry name" value="Ribosomal protein S16"/>
    <property type="match status" value="1"/>
</dbReference>
<dbReference type="PROSITE" id="PS00732">
    <property type="entry name" value="RIBOSOMAL_S16"/>
    <property type="match status" value="1"/>
</dbReference>
<proteinExistence type="inferred from homology"/>
<accession>Q8G7G1</accession>
<protein>
    <recommendedName>
        <fullName evidence="1">Small ribosomal subunit protein bS16</fullName>
    </recommendedName>
    <alternativeName>
        <fullName evidence="3">30S ribosomal protein S16</fullName>
    </alternativeName>
</protein>
<keyword id="KW-1185">Reference proteome</keyword>
<keyword id="KW-0687">Ribonucleoprotein</keyword>
<keyword id="KW-0689">Ribosomal protein</keyword>
<gene>
    <name evidence="1" type="primary">rpsP</name>
    <name type="ordered locus">BL0305</name>
</gene>
<reference key="1">
    <citation type="journal article" date="2002" name="Proc. Natl. Acad. Sci. U.S.A.">
        <title>The genome sequence of Bifidobacterium longum reflects its adaptation to the human gastrointestinal tract.</title>
        <authorList>
            <person name="Schell M.A."/>
            <person name="Karmirantzou M."/>
            <person name="Snel B."/>
            <person name="Vilanova D."/>
            <person name="Berger B."/>
            <person name="Pessi G."/>
            <person name="Zwahlen M.-C."/>
            <person name="Desiere F."/>
            <person name="Bork P."/>
            <person name="Delley M."/>
            <person name="Pridmore R.D."/>
            <person name="Arigoni F."/>
        </authorList>
    </citation>
    <scope>NUCLEOTIDE SEQUENCE [LARGE SCALE GENOMIC DNA]</scope>
    <source>
        <strain>NCC 2705</strain>
    </source>
</reference>
<organism>
    <name type="scientific">Bifidobacterium longum (strain NCC 2705)</name>
    <dbReference type="NCBI Taxonomy" id="206672"/>
    <lineage>
        <taxon>Bacteria</taxon>
        <taxon>Bacillati</taxon>
        <taxon>Actinomycetota</taxon>
        <taxon>Actinomycetes</taxon>
        <taxon>Bifidobacteriales</taxon>
        <taxon>Bifidobacteriaceae</taxon>
        <taxon>Bifidobacterium</taxon>
    </lineage>
</organism>